<organism>
    <name type="scientific">Oryza sativa subsp. indica</name>
    <name type="common">Rice</name>
    <dbReference type="NCBI Taxonomy" id="39946"/>
    <lineage>
        <taxon>Eukaryota</taxon>
        <taxon>Viridiplantae</taxon>
        <taxon>Streptophyta</taxon>
        <taxon>Embryophyta</taxon>
        <taxon>Tracheophyta</taxon>
        <taxon>Spermatophyta</taxon>
        <taxon>Magnoliopsida</taxon>
        <taxon>Liliopsida</taxon>
        <taxon>Poales</taxon>
        <taxon>Poaceae</taxon>
        <taxon>BOP clade</taxon>
        <taxon>Oryzoideae</taxon>
        <taxon>Oryzeae</taxon>
        <taxon>Oryzinae</taxon>
        <taxon>Oryza</taxon>
        <taxon>Oryza sativa</taxon>
    </lineage>
</organism>
<sequence length="131" mass="14133">MSWQAYVDDHLMCEIDGNHLTAAAIVGHDGSVWAQSPNFPQYKPEEITGIMKDFDEPGSLAPTGLFLGGTKYMVIQGEPGVVIRGKKGTGGICVKKTGLSLILGIYDEPMTPGQCNMIVERLGDYLIEQGC</sequence>
<dbReference type="EMBL" id="CM000131">
    <property type="protein sequence ID" value="EAY99721.1"/>
    <property type="molecule type" value="Genomic_DNA"/>
</dbReference>
<dbReference type="SMR" id="P83647"/>
<dbReference type="STRING" id="39946.P83647"/>
<dbReference type="Allergome" id="996">
    <property type="allergen name" value="Ory s 12"/>
</dbReference>
<dbReference type="EnsemblPlants" id="BGIOSGA022333-TA">
    <property type="protein sequence ID" value="BGIOSGA022333-PA"/>
    <property type="gene ID" value="BGIOSGA022333"/>
</dbReference>
<dbReference type="EnsemblPlants" id="OsGoSa_06g0003750.01">
    <property type="protein sequence ID" value="OsGoSa_06g0003750.01"/>
    <property type="gene ID" value="OsGoSa_06g0003750"/>
</dbReference>
<dbReference type="EnsemblPlants" id="OsIR64_06g0003650.01">
    <property type="protein sequence ID" value="OsIR64_06g0003650.01"/>
    <property type="gene ID" value="OsIR64_06g0003650"/>
</dbReference>
<dbReference type="EnsemblPlants" id="OsKYG_06g0003690.01">
    <property type="protein sequence ID" value="OsKYG_06g0003690.01"/>
    <property type="gene ID" value="OsKYG_06g0003690"/>
</dbReference>
<dbReference type="EnsemblPlants" id="OsLaMu_06g0003570.01">
    <property type="protein sequence ID" value="OsLaMu_06g0003570.01"/>
    <property type="gene ID" value="OsLaMu_06g0003570"/>
</dbReference>
<dbReference type="EnsemblPlants" id="OsLima_06g0003830.01">
    <property type="protein sequence ID" value="OsLima_06g0003830.01"/>
    <property type="gene ID" value="OsLima_06g0003830"/>
</dbReference>
<dbReference type="EnsemblPlants" id="OsLiXu_06g0003730.01">
    <property type="protein sequence ID" value="OsLiXu_06g0003730.01"/>
    <property type="gene ID" value="OsLiXu_06g0003730"/>
</dbReference>
<dbReference type="EnsemblPlants" id="OsLiXu_Ung0026400.01">
    <property type="protein sequence ID" value="OsLiXu_Ung0026400.01"/>
    <property type="gene ID" value="OsLiXu_Ung0026400"/>
</dbReference>
<dbReference type="EnsemblPlants" id="OsMH63_06G003600_01">
    <property type="protein sequence ID" value="OsMH63_06G003600_01"/>
    <property type="gene ID" value="OsMH63_06G003600"/>
</dbReference>
<dbReference type="EnsemblPlants" id="OsPr106_06g0003710.01">
    <property type="protein sequence ID" value="OsPr106_06g0003710.01"/>
    <property type="gene ID" value="OsPr106_06g0003710"/>
</dbReference>
<dbReference type="EnsemblPlants" id="OsZS97_06G003690_01">
    <property type="protein sequence ID" value="OsZS97_06G003690_01"/>
    <property type="gene ID" value="OsZS97_06G003690"/>
</dbReference>
<dbReference type="Gramene" id="BGIOSGA022333-TA">
    <property type="protein sequence ID" value="BGIOSGA022333-PA"/>
    <property type="gene ID" value="BGIOSGA022333"/>
</dbReference>
<dbReference type="Gramene" id="OsGoSa_06g0003750.01">
    <property type="protein sequence ID" value="OsGoSa_06g0003750.01"/>
    <property type="gene ID" value="OsGoSa_06g0003750"/>
</dbReference>
<dbReference type="Gramene" id="OsIR64_06g0003650.01">
    <property type="protein sequence ID" value="OsIR64_06g0003650.01"/>
    <property type="gene ID" value="OsIR64_06g0003650"/>
</dbReference>
<dbReference type="Gramene" id="OsKYG_06g0003690.01">
    <property type="protein sequence ID" value="OsKYG_06g0003690.01"/>
    <property type="gene ID" value="OsKYG_06g0003690"/>
</dbReference>
<dbReference type="Gramene" id="OsLaMu_06g0003570.01">
    <property type="protein sequence ID" value="OsLaMu_06g0003570.01"/>
    <property type="gene ID" value="OsLaMu_06g0003570"/>
</dbReference>
<dbReference type="Gramene" id="OsLima_06g0003830.01">
    <property type="protein sequence ID" value="OsLima_06g0003830.01"/>
    <property type="gene ID" value="OsLima_06g0003830"/>
</dbReference>
<dbReference type="Gramene" id="OsLiXu_06g0003730.01">
    <property type="protein sequence ID" value="OsLiXu_06g0003730.01"/>
    <property type="gene ID" value="OsLiXu_06g0003730"/>
</dbReference>
<dbReference type="Gramene" id="OsLiXu_Ung0026400.01">
    <property type="protein sequence ID" value="OsLiXu_Ung0026400.01"/>
    <property type="gene ID" value="OsLiXu_Ung0026400"/>
</dbReference>
<dbReference type="Gramene" id="OsMH63_06G003600_01">
    <property type="protein sequence ID" value="OsMH63_06G003600_01"/>
    <property type="gene ID" value="OsMH63_06G003600"/>
</dbReference>
<dbReference type="Gramene" id="OsPr106_06g0003710.01">
    <property type="protein sequence ID" value="OsPr106_06g0003710.01"/>
    <property type="gene ID" value="OsPr106_06g0003710"/>
</dbReference>
<dbReference type="Gramene" id="OsZS97_06G003690_01">
    <property type="protein sequence ID" value="OsZS97_06G003690_01"/>
    <property type="gene ID" value="OsZS97_06G003690"/>
</dbReference>
<dbReference type="HOGENOM" id="CLU_120772_0_1_1"/>
<dbReference type="OMA" id="HHAENVQ"/>
<dbReference type="OrthoDB" id="421374at2759"/>
<dbReference type="Proteomes" id="UP000007015">
    <property type="component" value="Chromosome 6"/>
</dbReference>
<dbReference type="GO" id="GO:0005938">
    <property type="term" value="C:cell cortex"/>
    <property type="evidence" value="ECO:0007669"/>
    <property type="project" value="TreeGrafter"/>
</dbReference>
<dbReference type="GO" id="GO:0005856">
    <property type="term" value="C:cytoskeleton"/>
    <property type="evidence" value="ECO:0007669"/>
    <property type="project" value="UniProtKB-SubCell"/>
</dbReference>
<dbReference type="GO" id="GO:0009536">
    <property type="term" value="C:plastid"/>
    <property type="evidence" value="ECO:0000305"/>
    <property type="project" value="Gramene"/>
</dbReference>
<dbReference type="GO" id="GO:0003785">
    <property type="term" value="F:actin monomer binding"/>
    <property type="evidence" value="ECO:0007669"/>
    <property type="project" value="TreeGrafter"/>
</dbReference>
<dbReference type="CDD" id="cd00148">
    <property type="entry name" value="PROF"/>
    <property type="match status" value="1"/>
</dbReference>
<dbReference type="FunFam" id="3.30.450.30:FF:000001">
    <property type="entry name" value="Profilin"/>
    <property type="match status" value="1"/>
</dbReference>
<dbReference type="Gene3D" id="3.30.450.30">
    <property type="entry name" value="Dynein light chain 2a, cytoplasmic"/>
    <property type="match status" value="1"/>
</dbReference>
<dbReference type="InterPro" id="IPR048278">
    <property type="entry name" value="PFN"/>
</dbReference>
<dbReference type="InterPro" id="IPR005455">
    <property type="entry name" value="PFN_euk"/>
</dbReference>
<dbReference type="InterPro" id="IPR036140">
    <property type="entry name" value="PFN_sf"/>
</dbReference>
<dbReference type="InterPro" id="IPR027310">
    <property type="entry name" value="Profilin_CS"/>
</dbReference>
<dbReference type="PANTHER" id="PTHR11604">
    <property type="entry name" value="PROFILIN"/>
    <property type="match status" value="1"/>
</dbReference>
<dbReference type="PANTHER" id="PTHR11604:SF67">
    <property type="entry name" value="PROFILIN LP04"/>
    <property type="match status" value="1"/>
</dbReference>
<dbReference type="Pfam" id="PF00235">
    <property type="entry name" value="Profilin"/>
    <property type="match status" value="1"/>
</dbReference>
<dbReference type="PRINTS" id="PR00392">
    <property type="entry name" value="PROFILIN"/>
</dbReference>
<dbReference type="PRINTS" id="PR01640">
    <property type="entry name" value="PROFILINPLNT"/>
</dbReference>
<dbReference type="SMART" id="SM00392">
    <property type="entry name" value="PROF"/>
    <property type="match status" value="1"/>
</dbReference>
<dbReference type="SUPFAM" id="SSF55770">
    <property type="entry name" value="Profilin (actin-binding protein)"/>
    <property type="match status" value="1"/>
</dbReference>
<dbReference type="PROSITE" id="PS00414">
    <property type="entry name" value="PROFILIN"/>
    <property type="match status" value="1"/>
</dbReference>
<name>PROFX_ORYSI</name>
<protein>
    <recommendedName>
        <fullName>Profilin LP04</fullName>
    </recommendedName>
</protein>
<reference key="1">
    <citation type="journal article" date="2005" name="PLoS Biol.">
        <title>The genomes of Oryza sativa: a history of duplications.</title>
        <authorList>
            <person name="Yu J."/>
            <person name="Wang J."/>
            <person name="Lin W."/>
            <person name="Li S."/>
            <person name="Li H."/>
            <person name="Zhou J."/>
            <person name="Ni P."/>
            <person name="Dong W."/>
            <person name="Hu S."/>
            <person name="Zeng C."/>
            <person name="Zhang J."/>
            <person name="Zhang Y."/>
            <person name="Li R."/>
            <person name="Xu Z."/>
            <person name="Li S."/>
            <person name="Li X."/>
            <person name="Zheng H."/>
            <person name="Cong L."/>
            <person name="Lin L."/>
            <person name="Yin J."/>
            <person name="Geng J."/>
            <person name="Li G."/>
            <person name="Shi J."/>
            <person name="Liu J."/>
            <person name="Lv H."/>
            <person name="Li J."/>
            <person name="Wang J."/>
            <person name="Deng Y."/>
            <person name="Ran L."/>
            <person name="Shi X."/>
            <person name="Wang X."/>
            <person name="Wu Q."/>
            <person name="Li C."/>
            <person name="Ren X."/>
            <person name="Wang J."/>
            <person name="Wang X."/>
            <person name="Li D."/>
            <person name="Liu D."/>
            <person name="Zhang X."/>
            <person name="Ji Z."/>
            <person name="Zhao W."/>
            <person name="Sun Y."/>
            <person name="Zhang Z."/>
            <person name="Bao J."/>
            <person name="Han Y."/>
            <person name="Dong L."/>
            <person name="Ji J."/>
            <person name="Chen P."/>
            <person name="Wu S."/>
            <person name="Liu J."/>
            <person name="Xiao Y."/>
            <person name="Bu D."/>
            <person name="Tan J."/>
            <person name="Yang L."/>
            <person name="Ye C."/>
            <person name="Zhang J."/>
            <person name="Xu J."/>
            <person name="Zhou Y."/>
            <person name="Yu Y."/>
            <person name="Zhang B."/>
            <person name="Zhuang S."/>
            <person name="Wei H."/>
            <person name="Liu B."/>
            <person name="Lei M."/>
            <person name="Yu H."/>
            <person name="Li Y."/>
            <person name="Xu H."/>
            <person name="Wei S."/>
            <person name="He X."/>
            <person name="Fang L."/>
            <person name="Zhang Z."/>
            <person name="Zhang Y."/>
            <person name="Huang X."/>
            <person name="Su Z."/>
            <person name="Tong W."/>
            <person name="Li J."/>
            <person name="Tong Z."/>
            <person name="Li S."/>
            <person name="Ye J."/>
            <person name="Wang L."/>
            <person name="Fang L."/>
            <person name="Lei T."/>
            <person name="Chen C.-S."/>
            <person name="Chen H.-C."/>
            <person name="Xu Z."/>
            <person name="Li H."/>
            <person name="Huang H."/>
            <person name="Zhang F."/>
            <person name="Xu H."/>
            <person name="Li N."/>
            <person name="Zhao C."/>
            <person name="Li S."/>
            <person name="Dong L."/>
            <person name="Huang Y."/>
            <person name="Li L."/>
            <person name="Xi Y."/>
            <person name="Qi Q."/>
            <person name="Li W."/>
            <person name="Zhang B."/>
            <person name="Hu W."/>
            <person name="Zhang Y."/>
            <person name="Tian X."/>
            <person name="Jiao Y."/>
            <person name="Liang X."/>
            <person name="Jin J."/>
            <person name="Gao L."/>
            <person name="Zheng W."/>
            <person name="Hao B."/>
            <person name="Liu S.-M."/>
            <person name="Wang W."/>
            <person name="Yuan L."/>
            <person name="Cao M."/>
            <person name="McDermott J."/>
            <person name="Samudrala R."/>
            <person name="Wang J."/>
            <person name="Wong G.K.-S."/>
            <person name="Yang H."/>
        </authorList>
    </citation>
    <scope>NUCLEOTIDE SEQUENCE [LARGE SCALE GENOMIC DNA]</scope>
    <source>
        <strain>cv. 93-11</strain>
    </source>
</reference>
<reference evidence="2" key="2">
    <citation type="submission" date="2003-07" db="UniProtKB">
        <title>Proteome analysis of rice panicle.</title>
        <authorList>
            <person name="Salekdeh G.H."/>
            <person name="Bennett J."/>
        </authorList>
    </citation>
    <scope>PROTEIN SEQUENCE OF 57-61 AND 72-79</scope>
    <source>
        <strain>cv. IR64</strain>
        <tissue evidence="2">Panicle</tissue>
    </source>
</reference>
<accession>P83647</accession>
<accession>A2Y9G1</accession>
<proteinExistence type="evidence at protein level"/>
<gene>
    <name type="ORF">OsI_020954</name>
</gene>
<keyword id="KW-0009">Actin-binding</keyword>
<keyword id="KW-0963">Cytoplasm</keyword>
<keyword id="KW-0206">Cytoskeleton</keyword>
<keyword id="KW-0903">Direct protein sequencing</keyword>
<keyword id="KW-1185">Reference proteome</keyword>
<feature type="initiator methionine" description="Removed" evidence="1">
    <location>
        <position position="1"/>
    </location>
</feature>
<feature type="chain" id="PRO_0000199660" description="Profilin LP04">
    <location>
        <begin position="2"/>
        <end position="131"/>
    </location>
</feature>
<comment type="function">
    <text evidence="1">Binds to actin and affects the structure of the cytoskeleton. At high concentrations, profilin prevents the polymerization of actin, whereas it enhances it at low concentrations. By binding to PIP2, it inhibits the formation of IP3 and DG (By similarity).</text>
</comment>
<comment type="subunit">
    <text>Occurs in many kinds of cells as a complex with monomeric actin in a 1:1 ratio.</text>
</comment>
<comment type="subcellular location">
    <subcellularLocation>
        <location evidence="1">Cytoplasm</location>
        <location evidence="1">Cytoskeleton</location>
    </subcellularLocation>
</comment>
<comment type="similarity">
    <text evidence="2">Belongs to the profilin family.</text>
</comment>
<evidence type="ECO:0000250" key="1"/>
<evidence type="ECO:0000305" key="2"/>